<accession>O43999</accession>
<dbReference type="EMBL" id="AF042107">
    <property type="protein sequence ID" value="AAD08643.1"/>
    <property type="molecule type" value="mRNA"/>
</dbReference>
<dbReference type="SMR" id="O43999"/>
<dbReference type="VEuPathDB" id="ToxoDB:ETH2_1223000"/>
<dbReference type="VEuPathDB" id="ToxoDB:ETH_00019425"/>
<dbReference type="GO" id="GO:0022627">
    <property type="term" value="C:cytosolic small ribosomal subunit"/>
    <property type="evidence" value="ECO:0007669"/>
    <property type="project" value="UniProtKB-UniRule"/>
</dbReference>
<dbReference type="GO" id="GO:0003735">
    <property type="term" value="F:structural constituent of ribosome"/>
    <property type="evidence" value="ECO:0007669"/>
    <property type="project" value="UniProtKB-UniRule"/>
</dbReference>
<dbReference type="GO" id="GO:0006412">
    <property type="term" value="P:translation"/>
    <property type="evidence" value="ECO:0007669"/>
    <property type="project" value="UniProtKB-UniRule"/>
</dbReference>
<dbReference type="HAMAP" id="MF_03122">
    <property type="entry name" value="Ribosomal_eS1_euk"/>
    <property type="match status" value="1"/>
</dbReference>
<dbReference type="InterPro" id="IPR001593">
    <property type="entry name" value="Ribosomal_eS1"/>
</dbReference>
<dbReference type="InterPro" id="IPR018281">
    <property type="entry name" value="Ribosomal_eS1_CS"/>
</dbReference>
<dbReference type="InterPro" id="IPR027500">
    <property type="entry name" value="Ribosomal_eS1_euk"/>
</dbReference>
<dbReference type="PANTHER" id="PTHR11830">
    <property type="entry name" value="40S RIBOSOMAL PROTEIN S3A"/>
    <property type="match status" value="1"/>
</dbReference>
<dbReference type="Pfam" id="PF01015">
    <property type="entry name" value="Ribosomal_S3Ae"/>
    <property type="match status" value="1"/>
</dbReference>
<dbReference type="SMART" id="SM01397">
    <property type="entry name" value="Ribosomal_S3Ae"/>
    <property type="match status" value="1"/>
</dbReference>
<dbReference type="PROSITE" id="PS01191">
    <property type="entry name" value="RIBOSOMAL_S3AE"/>
    <property type="match status" value="1"/>
</dbReference>
<keyword id="KW-0963">Cytoplasm</keyword>
<keyword id="KW-0687">Ribonucleoprotein</keyword>
<keyword id="KW-0689">Ribosomal protein</keyword>
<proteinExistence type="evidence at transcript level"/>
<reference key="1">
    <citation type="journal article" date="1998" name="Gene">
        <title>Eimeria tenella: cloning and characterization of cDNA encoding a S3a ribosomal protein.</title>
        <authorList>
            <person name="Ouarzane M."/>
            <person name="Labbe M."/>
            <person name="Pery P."/>
        </authorList>
    </citation>
    <scope>NUCLEOTIDE SEQUENCE [MRNA]</scope>
    <source>
        <strain>PAPt38</strain>
    </source>
</reference>
<organism>
    <name type="scientific">Eimeria tenella</name>
    <name type="common">Coccidian parasite</name>
    <dbReference type="NCBI Taxonomy" id="5802"/>
    <lineage>
        <taxon>Eukaryota</taxon>
        <taxon>Sar</taxon>
        <taxon>Alveolata</taxon>
        <taxon>Apicomplexa</taxon>
        <taxon>Conoidasida</taxon>
        <taxon>Coccidia</taxon>
        <taxon>Eucoccidiorida</taxon>
        <taxon>Eimeriorina</taxon>
        <taxon>Eimeriidae</taxon>
        <taxon>Eimeria</taxon>
    </lineage>
</organism>
<feature type="initiator methionine" description="Removed" evidence="1">
    <location>
        <position position="1"/>
    </location>
</feature>
<feature type="chain" id="PRO_0000153531" description="Small ribosomal subunit protein eS1">
    <location>
        <begin position="2"/>
        <end position="264"/>
    </location>
</feature>
<feature type="region of interest" description="Disordered" evidence="2">
    <location>
        <begin position="233"/>
        <end position="264"/>
    </location>
</feature>
<feature type="compositionally biased region" description="Basic and acidic residues" evidence="2">
    <location>
        <begin position="242"/>
        <end position="255"/>
    </location>
</feature>
<protein>
    <recommendedName>
        <fullName evidence="1">Small ribosomal subunit protein eS1</fullName>
    </recommendedName>
    <alternativeName>
        <fullName evidence="3">40S ribosomal protein S3a</fullName>
    </alternativeName>
    <alternativeName>
        <fullName>EtS3a</fullName>
    </alternativeName>
</protein>
<name>RS3A_EIMTE</name>
<comment type="subunit">
    <text evidence="1">Component of the small ribosomal subunit. Mature ribosomes consist of a small (40S) and a large (60S) subunit. The 40S subunit contains about 33 different proteins and 1 molecule of RNA (18S). The 60S subunit contains about 49 different proteins and 3 molecules of RNA (25S, 5.8S and 5S).</text>
</comment>
<comment type="subcellular location">
    <subcellularLocation>
        <location evidence="1">Cytoplasm</location>
    </subcellularLocation>
</comment>
<comment type="similarity">
    <text evidence="1">Belongs to the eukaryotic ribosomal protein eS1 family.</text>
</comment>
<sequence length="264" mass="29860">MAVGKNKRLTKGGKKGAKKKVVDPFSKKDWYDVKAPAMFNIRNIGKTLVTRTQGTKIASDGLKGRVFEVSLADLQNDEVAFRKFKLITEDVQGKNCLTNFHGMDLTRDKMFSMVKKWQTMIEAHVDVKTTDGYLLRLFCVGFTKKRNNQIRKTSYAQHQQVRQIRKKMMEIMTGEFQTNDLKEVVNKLIPDSIGKDIEKACQSIYPLHDVYVRKVKMLKKPKFELGKLMELHGEGGGAGKPSGDEAGAKVERADGYEPPVQESV</sequence>
<evidence type="ECO:0000255" key="1">
    <source>
        <dbReference type="HAMAP-Rule" id="MF_03122"/>
    </source>
</evidence>
<evidence type="ECO:0000256" key="2">
    <source>
        <dbReference type="SAM" id="MobiDB-lite"/>
    </source>
</evidence>
<evidence type="ECO:0000305" key="3"/>